<sequence length="423" mass="46406">MADKKGSNSEKLLYCSFCGKSQHEVKKLIAGPSVFICDECIDLCNEIIRDEAAAAGVEASLSKSDLPSPQEIRDILDQYVIGQERAKKILAVAVYNHYKRLKHLDKKDDVELSKSNILLIGPTGSGKTLLAQTLARLLNVPFVIADATTLTEAGYVGEDVENIIQKLLQNCNYEVDKAQRGIVYIDEIDKISRKSDNPSITRDVSGEGVQQALLKLVEGTMASVPPQGGRKHPNQDFIQVDTTNILFICGGAFDGLEKVITDRTEKTGIGFGATVKSKQERDAGEVLREVEPEDLIKFGLIPELIGRLPVVATLGKLDEAALMKILVEPKNALVKQYQKLFAMERVELEIRPDALQAVARKAIRRKTGARGLRSIIEQALLDVMYELPTLKGVSKVIIDDNVIEGDGKPLLIYEDTPKVAGSN</sequence>
<organism>
    <name type="scientific">Burkholderia thailandensis (strain ATCC 700388 / DSM 13276 / CCUG 48851 / CIP 106301 / E264)</name>
    <dbReference type="NCBI Taxonomy" id="271848"/>
    <lineage>
        <taxon>Bacteria</taxon>
        <taxon>Pseudomonadati</taxon>
        <taxon>Pseudomonadota</taxon>
        <taxon>Betaproteobacteria</taxon>
        <taxon>Burkholderiales</taxon>
        <taxon>Burkholderiaceae</taxon>
        <taxon>Burkholderia</taxon>
        <taxon>pseudomallei group</taxon>
    </lineage>
</organism>
<comment type="function">
    <text evidence="1">ATP-dependent specificity component of the Clp protease. It directs the protease to specific substrates. Can perform chaperone functions in the absence of ClpP.</text>
</comment>
<comment type="subunit">
    <text evidence="1">Component of the ClpX-ClpP complex. Forms a hexameric ring that, in the presence of ATP, binds to fourteen ClpP subunits assembled into a disk-like structure with a central cavity, resembling the structure of eukaryotic proteasomes.</text>
</comment>
<comment type="similarity">
    <text evidence="1">Belongs to the ClpX chaperone family.</text>
</comment>
<feature type="chain" id="PRO_1000024534" description="ATP-dependent Clp protease ATP-binding subunit ClpX">
    <location>
        <begin position="1"/>
        <end position="423"/>
    </location>
</feature>
<feature type="domain" description="ClpX-type ZB" evidence="2">
    <location>
        <begin position="3"/>
        <end position="56"/>
    </location>
</feature>
<feature type="binding site" evidence="2">
    <location>
        <position position="15"/>
    </location>
    <ligand>
        <name>Zn(2+)</name>
        <dbReference type="ChEBI" id="CHEBI:29105"/>
    </ligand>
</feature>
<feature type="binding site" evidence="2">
    <location>
        <position position="18"/>
    </location>
    <ligand>
        <name>Zn(2+)</name>
        <dbReference type="ChEBI" id="CHEBI:29105"/>
    </ligand>
</feature>
<feature type="binding site" evidence="2">
    <location>
        <position position="37"/>
    </location>
    <ligand>
        <name>Zn(2+)</name>
        <dbReference type="ChEBI" id="CHEBI:29105"/>
    </ligand>
</feature>
<feature type="binding site" evidence="2">
    <location>
        <position position="40"/>
    </location>
    <ligand>
        <name>Zn(2+)</name>
        <dbReference type="ChEBI" id="CHEBI:29105"/>
    </ligand>
</feature>
<feature type="binding site" evidence="1">
    <location>
        <begin position="122"/>
        <end position="129"/>
    </location>
    <ligand>
        <name>ATP</name>
        <dbReference type="ChEBI" id="CHEBI:30616"/>
    </ligand>
</feature>
<gene>
    <name evidence="1" type="primary">clpX</name>
    <name type="ordered locus">BTH_I2121</name>
</gene>
<name>CLPX_BURTA</name>
<keyword id="KW-0067">ATP-binding</keyword>
<keyword id="KW-0143">Chaperone</keyword>
<keyword id="KW-0479">Metal-binding</keyword>
<keyword id="KW-0547">Nucleotide-binding</keyword>
<keyword id="KW-0862">Zinc</keyword>
<reference key="1">
    <citation type="journal article" date="2005" name="BMC Genomics">
        <title>Bacterial genome adaptation to niches: divergence of the potential virulence genes in three Burkholderia species of different survival strategies.</title>
        <authorList>
            <person name="Kim H.S."/>
            <person name="Schell M.A."/>
            <person name="Yu Y."/>
            <person name="Ulrich R.L."/>
            <person name="Sarria S.H."/>
            <person name="Nierman W.C."/>
            <person name="DeShazer D."/>
        </authorList>
    </citation>
    <scope>NUCLEOTIDE SEQUENCE [LARGE SCALE GENOMIC DNA]</scope>
    <source>
        <strain>ATCC 700388 / DSM 13276 / CCUG 48851 / CIP 106301 / E264</strain>
    </source>
</reference>
<evidence type="ECO:0000255" key="1">
    <source>
        <dbReference type="HAMAP-Rule" id="MF_00175"/>
    </source>
</evidence>
<evidence type="ECO:0000255" key="2">
    <source>
        <dbReference type="PROSITE-ProRule" id="PRU01250"/>
    </source>
</evidence>
<protein>
    <recommendedName>
        <fullName evidence="1">ATP-dependent Clp protease ATP-binding subunit ClpX</fullName>
    </recommendedName>
</protein>
<dbReference type="EMBL" id="CP000086">
    <property type="protein sequence ID" value="ABC38969.1"/>
    <property type="molecule type" value="Genomic_DNA"/>
</dbReference>
<dbReference type="RefSeq" id="WP_009890609.1">
    <property type="nucleotide sequence ID" value="NZ_CP008785.1"/>
</dbReference>
<dbReference type="SMR" id="Q2SWQ5"/>
<dbReference type="GeneID" id="45121844"/>
<dbReference type="KEGG" id="bte:BTH_I2121"/>
<dbReference type="HOGENOM" id="CLU_014218_8_2_4"/>
<dbReference type="Proteomes" id="UP000001930">
    <property type="component" value="Chromosome I"/>
</dbReference>
<dbReference type="GO" id="GO:0009376">
    <property type="term" value="C:HslUV protease complex"/>
    <property type="evidence" value="ECO:0007669"/>
    <property type="project" value="TreeGrafter"/>
</dbReference>
<dbReference type="GO" id="GO:0005524">
    <property type="term" value="F:ATP binding"/>
    <property type="evidence" value="ECO:0007669"/>
    <property type="project" value="UniProtKB-UniRule"/>
</dbReference>
<dbReference type="GO" id="GO:0016887">
    <property type="term" value="F:ATP hydrolysis activity"/>
    <property type="evidence" value="ECO:0007669"/>
    <property type="project" value="InterPro"/>
</dbReference>
<dbReference type="GO" id="GO:0140662">
    <property type="term" value="F:ATP-dependent protein folding chaperone"/>
    <property type="evidence" value="ECO:0007669"/>
    <property type="project" value="InterPro"/>
</dbReference>
<dbReference type="GO" id="GO:0046983">
    <property type="term" value="F:protein dimerization activity"/>
    <property type="evidence" value="ECO:0007669"/>
    <property type="project" value="InterPro"/>
</dbReference>
<dbReference type="GO" id="GO:0051082">
    <property type="term" value="F:unfolded protein binding"/>
    <property type="evidence" value="ECO:0007669"/>
    <property type="project" value="UniProtKB-UniRule"/>
</dbReference>
<dbReference type="GO" id="GO:0008270">
    <property type="term" value="F:zinc ion binding"/>
    <property type="evidence" value="ECO:0007669"/>
    <property type="project" value="InterPro"/>
</dbReference>
<dbReference type="GO" id="GO:0051301">
    <property type="term" value="P:cell division"/>
    <property type="evidence" value="ECO:0007669"/>
    <property type="project" value="TreeGrafter"/>
</dbReference>
<dbReference type="GO" id="GO:0051603">
    <property type="term" value="P:proteolysis involved in protein catabolic process"/>
    <property type="evidence" value="ECO:0007669"/>
    <property type="project" value="TreeGrafter"/>
</dbReference>
<dbReference type="CDD" id="cd19497">
    <property type="entry name" value="RecA-like_ClpX"/>
    <property type="match status" value="1"/>
</dbReference>
<dbReference type="FunFam" id="1.10.8.60:FF:000002">
    <property type="entry name" value="ATP-dependent Clp protease ATP-binding subunit ClpX"/>
    <property type="match status" value="1"/>
</dbReference>
<dbReference type="FunFam" id="3.40.50.300:FF:000005">
    <property type="entry name" value="ATP-dependent Clp protease ATP-binding subunit ClpX"/>
    <property type="match status" value="1"/>
</dbReference>
<dbReference type="Gene3D" id="1.10.8.60">
    <property type="match status" value="1"/>
</dbReference>
<dbReference type="Gene3D" id="6.20.220.10">
    <property type="entry name" value="ClpX chaperone, C4-type zinc finger domain"/>
    <property type="match status" value="1"/>
</dbReference>
<dbReference type="Gene3D" id="3.40.50.300">
    <property type="entry name" value="P-loop containing nucleotide triphosphate hydrolases"/>
    <property type="match status" value="1"/>
</dbReference>
<dbReference type="HAMAP" id="MF_00175">
    <property type="entry name" value="ClpX"/>
    <property type="match status" value="1"/>
</dbReference>
<dbReference type="InterPro" id="IPR003593">
    <property type="entry name" value="AAA+_ATPase"/>
</dbReference>
<dbReference type="InterPro" id="IPR050052">
    <property type="entry name" value="ATP-dep_Clp_protease_ClpX"/>
</dbReference>
<dbReference type="InterPro" id="IPR003959">
    <property type="entry name" value="ATPase_AAA_core"/>
</dbReference>
<dbReference type="InterPro" id="IPR019489">
    <property type="entry name" value="Clp_ATPase_C"/>
</dbReference>
<dbReference type="InterPro" id="IPR004487">
    <property type="entry name" value="Clp_protease_ATP-bd_su_ClpX"/>
</dbReference>
<dbReference type="InterPro" id="IPR046425">
    <property type="entry name" value="ClpX_bact"/>
</dbReference>
<dbReference type="InterPro" id="IPR027417">
    <property type="entry name" value="P-loop_NTPase"/>
</dbReference>
<dbReference type="InterPro" id="IPR010603">
    <property type="entry name" value="Znf_CppX_C4"/>
</dbReference>
<dbReference type="InterPro" id="IPR038366">
    <property type="entry name" value="Znf_CppX_C4_sf"/>
</dbReference>
<dbReference type="NCBIfam" id="TIGR00382">
    <property type="entry name" value="clpX"/>
    <property type="match status" value="1"/>
</dbReference>
<dbReference type="NCBIfam" id="NF003745">
    <property type="entry name" value="PRK05342.1"/>
    <property type="match status" value="1"/>
</dbReference>
<dbReference type="PANTHER" id="PTHR48102:SF7">
    <property type="entry name" value="ATP-DEPENDENT CLP PROTEASE ATP-BINDING SUBUNIT CLPX-LIKE, MITOCHONDRIAL"/>
    <property type="match status" value="1"/>
</dbReference>
<dbReference type="PANTHER" id="PTHR48102">
    <property type="entry name" value="ATP-DEPENDENT CLP PROTEASE ATP-BINDING SUBUNIT CLPX-LIKE, MITOCHONDRIAL-RELATED"/>
    <property type="match status" value="1"/>
</dbReference>
<dbReference type="Pfam" id="PF07724">
    <property type="entry name" value="AAA_2"/>
    <property type="match status" value="1"/>
</dbReference>
<dbReference type="Pfam" id="PF10431">
    <property type="entry name" value="ClpB_D2-small"/>
    <property type="match status" value="1"/>
</dbReference>
<dbReference type="Pfam" id="PF06689">
    <property type="entry name" value="zf-C4_ClpX"/>
    <property type="match status" value="1"/>
</dbReference>
<dbReference type="SMART" id="SM00382">
    <property type="entry name" value="AAA"/>
    <property type="match status" value="1"/>
</dbReference>
<dbReference type="SMART" id="SM01086">
    <property type="entry name" value="ClpB_D2-small"/>
    <property type="match status" value="1"/>
</dbReference>
<dbReference type="SMART" id="SM00994">
    <property type="entry name" value="zf-C4_ClpX"/>
    <property type="match status" value="1"/>
</dbReference>
<dbReference type="SUPFAM" id="SSF57716">
    <property type="entry name" value="Glucocorticoid receptor-like (DNA-binding domain)"/>
    <property type="match status" value="1"/>
</dbReference>
<dbReference type="SUPFAM" id="SSF52540">
    <property type="entry name" value="P-loop containing nucleoside triphosphate hydrolases"/>
    <property type="match status" value="1"/>
</dbReference>
<dbReference type="PROSITE" id="PS51902">
    <property type="entry name" value="CLPX_ZB"/>
    <property type="match status" value="1"/>
</dbReference>
<accession>Q2SWQ5</accession>
<proteinExistence type="inferred from homology"/>